<reference key="1">
    <citation type="submission" date="2007-04" db="EMBL/GenBank/DDBJ databases">
        <title>Complete sequence of chromosome of Rhodobacter sphaeroides ATCC 17025.</title>
        <authorList>
            <consortium name="US DOE Joint Genome Institute"/>
            <person name="Copeland A."/>
            <person name="Lucas S."/>
            <person name="Lapidus A."/>
            <person name="Barry K."/>
            <person name="Detter J.C."/>
            <person name="Glavina del Rio T."/>
            <person name="Hammon N."/>
            <person name="Israni S."/>
            <person name="Dalin E."/>
            <person name="Tice H."/>
            <person name="Pitluck S."/>
            <person name="Chertkov O."/>
            <person name="Brettin T."/>
            <person name="Bruce D."/>
            <person name="Han C."/>
            <person name="Schmutz J."/>
            <person name="Larimer F."/>
            <person name="Land M."/>
            <person name="Hauser L."/>
            <person name="Kyrpides N."/>
            <person name="Kim E."/>
            <person name="Richardson P."/>
            <person name="Mackenzie C."/>
            <person name="Choudhary M."/>
            <person name="Donohue T.J."/>
            <person name="Kaplan S."/>
        </authorList>
    </citation>
    <scope>NUCLEOTIDE SEQUENCE [LARGE SCALE GENOMIC DNA]</scope>
    <source>
        <strain>ATCC 17025 / ATH 2.4.3</strain>
    </source>
</reference>
<sequence length="210" mass="21667">MPAIESGLLALILTGVLGYLLGSIPFGIVITRAFGLGDLRRIGSGNIGATNVLRTGNRPAALATLLLDSGKGAIAVLIARAAVGEDAAQLAAFTSFLGHLYPVWLGFRGGKGVATFLGTLIALAWPVGLACCLTWLATAAVSRISSLSALMAAASGVVWMLLLGQGQMAALGLVLAVLIFIRHHENIRRIANGTEPRIGKKASQDQSAEQ</sequence>
<evidence type="ECO:0000255" key="1">
    <source>
        <dbReference type="HAMAP-Rule" id="MF_01043"/>
    </source>
</evidence>
<protein>
    <recommendedName>
        <fullName evidence="1">Glycerol-3-phosphate acyltransferase</fullName>
    </recommendedName>
    <alternativeName>
        <fullName evidence="1">Acyl-PO4 G3P acyltransferase</fullName>
    </alternativeName>
    <alternativeName>
        <fullName evidence="1">Acyl-phosphate--glycerol-3-phosphate acyltransferase</fullName>
    </alternativeName>
    <alternativeName>
        <fullName evidence="1">G3P acyltransferase</fullName>
        <shortName evidence="1">GPAT</shortName>
        <ecNumber evidence="1">2.3.1.275</ecNumber>
    </alternativeName>
    <alternativeName>
        <fullName evidence="1">Lysophosphatidic acid synthase</fullName>
        <shortName evidence="1">LPA synthase</shortName>
    </alternativeName>
</protein>
<accession>A4WP17</accession>
<feature type="chain" id="PRO_1000064216" description="Glycerol-3-phosphate acyltransferase">
    <location>
        <begin position="1"/>
        <end position="210"/>
    </location>
</feature>
<feature type="transmembrane region" description="Helical" evidence="1">
    <location>
        <begin position="10"/>
        <end position="30"/>
    </location>
</feature>
<feature type="transmembrane region" description="Helical" evidence="1">
    <location>
        <begin position="59"/>
        <end position="79"/>
    </location>
</feature>
<feature type="transmembrane region" description="Helical" evidence="1">
    <location>
        <begin position="87"/>
        <end position="107"/>
    </location>
</feature>
<feature type="transmembrane region" description="Helical" evidence="1">
    <location>
        <begin position="116"/>
        <end position="136"/>
    </location>
</feature>
<feature type="transmembrane region" description="Helical" evidence="1">
    <location>
        <begin position="161"/>
        <end position="181"/>
    </location>
</feature>
<keyword id="KW-0997">Cell inner membrane</keyword>
<keyword id="KW-1003">Cell membrane</keyword>
<keyword id="KW-0444">Lipid biosynthesis</keyword>
<keyword id="KW-0443">Lipid metabolism</keyword>
<keyword id="KW-0472">Membrane</keyword>
<keyword id="KW-0594">Phospholipid biosynthesis</keyword>
<keyword id="KW-1208">Phospholipid metabolism</keyword>
<keyword id="KW-0808">Transferase</keyword>
<keyword id="KW-0812">Transmembrane</keyword>
<keyword id="KW-1133">Transmembrane helix</keyword>
<name>PLSY_CERS5</name>
<proteinExistence type="inferred from homology"/>
<organism>
    <name type="scientific">Cereibacter sphaeroides (strain ATCC 17025 / ATH 2.4.3)</name>
    <name type="common">Rhodobacter sphaeroides</name>
    <dbReference type="NCBI Taxonomy" id="349102"/>
    <lineage>
        <taxon>Bacteria</taxon>
        <taxon>Pseudomonadati</taxon>
        <taxon>Pseudomonadota</taxon>
        <taxon>Alphaproteobacteria</taxon>
        <taxon>Rhodobacterales</taxon>
        <taxon>Paracoccaceae</taxon>
        <taxon>Cereibacter</taxon>
    </lineage>
</organism>
<gene>
    <name evidence="1" type="primary">plsY</name>
    <name type="ordered locus">Rsph17025_0221</name>
</gene>
<comment type="function">
    <text evidence="1">Catalyzes the transfer of an acyl group from acyl-phosphate (acyl-PO(4)) to glycerol-3-phosphate (G3P) to form lysophosphatidic acid (LPA). This enzyme utilizes acyl-phosphate as fatty acyl donor, but not acyl-CoA or acyl-ACP.</text>
</comment>
<comment type="catalytic activity">
    <reaction evidence="1">
        <text>an acyl phosphate + sn-glycerol 3-phosphate = a 1-acyl-sn-glycero-3-phosphate + phosphate</text>
        <dbReference type="Rhea" id="RHEA:34075"/>
        <dbReference type="ChEBI" id="CHEBI:43474"/>
        <dbReference type="ChEBI" id="CHEBI:57597"/>
        <dbReference type="ChEBI" id="CHEBI:57970"/>
        <dbReference type="ChEBI" id="CHEBI:59918"/>
        <dbReference type="EC" id="2.3.1.275"/>
    </reaction>
</comment>
<comment type="pathway">
    <text evidence="1">Lipid metabolism; phospholipid metabolism.</text>
</comment>
<comment type="subunit">
    <text evidence="1">Probably interacts with PlsX.</text>
</comment>
<comment type="subcellular location">
    <subcellularLocation>
        <location evidence="1">Cell inner membrane</location>
        <topology evidence="1">Multi-pass membrane protein</topology>
    </subcellularLocation>
</comment>
<comment type="similarity">
    <text evidence="1">Belongs to the PlsY family.</text>
</comment>
<dbReference type="EC" id="2.3.1.275" evidence="1"/>
<dbReference type="EMBL" id="CP000661">
    <property type="protein sequence ID" value="ABP69131.1"/>
    <property type="molecule type" value="Genomic_DNA"/>
</dbReference>
<dbReference type="SMR" id="A4WP17"/>
<dbReference type="STRING" id="349102.Rsph17025_0221"/>
<dbReference type="KEGG" id="rsq:Rsph17025_0221"/>
<dbReference type="eggNOG" id="COG0344">
    <property type="taxonomic scope" value="Bacteria"/>
</dbReference>
<dbReference type="HOGENOM" id="CLU_081254_1_0_5"/>
<dbReference type="BioCyc" id="RSPH349102:G1G8M-227-MONOMER"/>
<dbReference type="UniPathway" id="UPA00085"/>
<dbReference type="GO" id="GO:0005886">
    <property type="term" value="C:plasma membrane"/>
    <property type="evidence" value="ECO:0007669"/>
    <property type="project" value="UniProtKB-SubCell"/>
</dbReference>
<dbReference type="GO" id="GO:0043772">
    <property type="term" value="F:acyl-phosphate glycerol-3-phosphate acyltransferase activity"/>
    <property type="evidence" value="ECO:0007669"/>
    <property type="project" value="UniProtKB-UniRule"/>
</dbReference>
<dbReference type="GO" id="GO:0008654">
    <property type="term" value="P:phospholipid biosynthetic process"/>
    <property type="evidence" value="ECO:0007669"/>
    <property type="project" value="UniProtKB-UniRule"/>
</dbReference>
<dbReference type="HAMAP" id="MF_01043">
    <property type="entry name" value="PlsY"/>
    <property type="match status" value="1"/>
</dbReference>
<dbReference type="InterPro" id="IPR003811">
    <property type="entry name" value="G3P_acylTferase_PlsY"/>
</dbReference>
<dbReference type="NCBIfam" id="TIGR00023">
    <property type="entry name" value="glycerol-3-phosphate 1-O-acyltransferase PlsY"/>
    <property type="match status" value="1"/>
</dbReference>
<dbReference type="PANTHER" id="PTHR30309:SF0">
    <property type="entry name" value="GLYCEROL-3-PHOSPHATE ACYLTRANSFERASE-RELATED"/>
    <property type="match status" value="1"/>
</dbReference>
<dbReference type="PANTHER" id="PTHR30309">
    <property type="entry name" value="INNER MEMBRANE PROTEIN YGIH"/>
    <property type="match status" value="1"/>
</dbReference>
<dbReference type="Pfam" id="PF02660">
    <property type="entry name" value="G3P_acyltransf"/>
    <property type="match status" value="1"/>
</dbReference>
<dbReference type="SMART" id="SM01207">
    <property type="entry name" value="G3P_acyltransf"/>
    <property type="match status" value="1"/>
</dbReference>